<evidence type="ECO:0000255" key="1">
    <source>
        <dbReference type="HAMAP-Rule" id="MF_00071"/>
    </source>
</evidence>
<proteinExistence type="inferred from homology"/>
<sequence length="612" mass="68205">MDYAEMLDRQKHIRNFSIIAHIDHGKSTLADRILEMTDTIAKRDMQAQVLDDMELERERGITIKLNAVELHYHAKDGETYIFHLIDTPGHVDFSYEVSRSLAACEGALLVVDAAQGVEAQTLANVYLAVDDDLEIVPVINKIDLPSAQPDVVKAEIEEMIGLDASEAVLASAKSGIGIEEILEKLVTDVPAPTGDLEAPLKALIFDSNYDSYRGVVLNIRVVDGTVKVGDKIRLMNSGKEFEVTEVGVMSPKAVKRDFLMVGDVGYITASIKTIQDTRVGDTVTLADNPADAPLDGYRHIQPMVYSGMYPVDNAKFNDLREALEKLQLNDAALEFEPESSQALGFGFRCGFLGLLHMDVVQERLEREFNLDLIMTAPSVDYHVALTDGTEEVIDNPSEMPETSNISEVKEPYVKASIMVPNDYVGAVMELAQRKRGEFVTMDYLDTYRVNVIYNMPLSEIIFDFFDDLKSNTKGYASFDYEVTGYRASDLVKIDILLNGEAVDALSFIVHRDFAFERSRVIVGKLKETIPRQQFEVPIQAAIGNKIIARSTVKAFRKNVLAKCYGGDITRKRKLLEKQKAGKKRMKSVGSVEVPQEAFMSILKMNDEDTKGK</sequence>
<accession>Q38W39</accession>
<name>LEPA_LATSS</name>
<feature type="chain" id="PRO_0000224768" description="Elongation factor 4">
    <location>
        <begin position="1"/>
        <end position="612"/>
    </location>
</feature>
<feature type="domain" description="tr-type G">
    <location>
        <begin position="11"/>
        <end position="193"/>
    </location>
</feature>
<feature type="binding site" evidence="1">
    <location>
        <begin position="23"/>
        <end position="28"/>
    </location>
    <ligand>
        <name>GTP</name>
        <dbReference type="ChEBI" id="CHEBI:37565"/>
    </ligand>
</feature>
<feature type="binding site" evidence="1">
    <location>
        <begin position="140"/>
        <end position="143"/>
    </location>
    <ligand>
        <name>GTP</name>
        <dbReference type="ChEBI" id="CHEBI:37565"/>
    </ligand>
</feature>
<keyword id="KW-1003">Cell membrane</keyword>
<keyword id="KW-0342">GTP-binding</keyword>
<keyword id="KW-0378">Hydrolase</keyword>
<keyword id="KW-0472">Membrane</keyword>
<keyword id="KW-0547">Nucleotide-binding</keyword>
<keyword id="KW-0648">Protein biosynthesis</keyword>
<keyword id="KW-1185">Reference proteome</keyword>
<gene>
    <name evidence="1" type="primary">lepA</name>
    <name type="ordered locus">LCA_1290</name>
</gene>
<organism>
    <name type="scientific">Latilactobacillus sakei subsp. sakei (strain 23K)</name>
    <name type="common">Lactobacillus sakei subsp. sakei</name>
    <dbReference type="NCBI Taxonomy" id="314315"/>
    <lineage>
        <taxon>Bacteria</taxon>
        <taxon>Bacillati</taxon>
        <taxon>Bacillota</taxon>
        <taxon>Bacilli</taxon>
        <taxon>Lactobacillales</taxon>
        <taxon>Lactobacillaceae</taxon>
        <taxon>Latilactobacillus</taxon>
    </lineage>
</organism>
<comment type="function">
    <text evidence="1">Required for accurate and efficient protein synthesis under certain stress conditions. May act as a fidelity factor of the translation reaction, by catalyzing a one-codon backward translocation of tRNAs on improperly translocated ribosomes. Back-translocation proceeds from a post-translocation (POST) complex to a pre-translocation (PRE) complex, thus giving elongation factor G a second chance to translocate the tRNAs correctly. Binds to ribosomes in a GTP-dependent manner.</text>
</comment>
<comment type="catalytic activity">
    <reaction evidence="1">
        <text>GTP + H2O = GDP + phosphate + H(+)</text>
        <dbReference type="Rhea" id="RHEA:19669"/>
        <dbReference type="ChEBI" id="CHEBI:15377"/>
        <dbReference type="ChEBI" id="CHEBI:15378"/>
        <dbReference type="ChEBI" id="CHEBI:37565"/>
        <dbReference type="ChEBI" id="CHEBI:43474"/>
        <dbReference type="ChEBI" id="CHEBI:58189"/>
        <dbReference type="EC" id="3.6.5.n1"/>
    </reaction>
</comment>
<comment type="subcellular location">
    <subcellularLocation>
        <location evidence="1">Cell membrane</location>
        <topology evidence="1">Peripheral membrane protein</topology>
        <orientation evidence="1">Cytoplasmic side</orientation>
    </subcellularLocation>
</comment>
<comment type="similarity">
    <text evidence="1">Belongs to the TRAFAC class translation factor GTPase superfamily. Classic translation factor GTPase family. LepA subfamily.</text>
</comment>
<reference key="1">
    <citation type="journal article" date="2005" name="Nat. Biotechnol.">
        <title>The complete genome sequence of the meat-borne lactic acid bacterium Lactobacillus sakei 23K.</title>
        <authorList>
            <person name="Chaillou S."/>
            <person name="Champomier-Verges M.-C."/>
            <person name="Cornet M."/>
            <person name="Crutz-Le Coq A.-M."/>
            <person name="Dudez A.-M."/>
            <person name="Martin V."/>
            <person name="Beaufils S."/>
            <person name="Darbon-Rongere E."/>
            <person name="Bossy R."/>
            <person name="Loux V."/>
            <person name="Zagorec M."/>
        </authorList>
    </citation>
    <scope>NUCLEOTIDE SEQUENCE [LARGE SCALE GENOMIC DNA]</scope>
    <source>
        <strain>23K</strain>
    </source>
</reference>
<dbReference type="EC" id="3.6.5.n1" evidence="1"/>
<dbReference type="EMBL" id="CR936503">
    <property type="protein sequence ID" value="CAI55594.1"/>
    <property type="molecule type" value="Genomic_DNA"/>
</dbReference>
<dbReference type="RefSeq" id="WP_011374985.1">
    <property type="nucleotide sequence ID" value="NC_007576.1"/>
</dbReference>
<dbReference type="SMR" id="Q38W39"/>
<dbReference type="STRING" id="314315.LCA_1290"/>
<dbReference type="GeneID" id="57132201"/>
<dbReference type="KEGG" id="lsa:LCA_1290"/>
<dbReference type="eggNOG" id="COG0481">
    <property type="taxonomic scope" value="Bacteria"/>
</dbReference>
<dbReference type="HOGENOM" id="CLU_009995_3_3_9"/>
<dbReference type="OrthoDB" id="9801591at2"/>
<dbReference type="Proteomes" id="UP000002707">
    <property type="component" value="Chromosome"/>
</dbReference>
<dbReference type="GO" id="GO:0005886">
    <property type="term" value="C:plasma membrane"/>
    <property type="evidence" value="ECO:0007669"/>
    <property type="project" value="UniProtKB-SubCell"/>
</dbReference>
<dbReference type="GO" id="GO:0005525">
    <property type="term" value="F:GTP binding"/>
    <property type="evidence" value="ECO:0007669"/>
    <property type="project" value="UniProtKB-UniRule"/>
</dbReference>
<dbReference type="GO" id="GO:0003924">
    <property type="term" value="F:GTPase activity"/>
    <property type="evidence" value="ECO:0007669"/>
    <property type="project" value="UniProtKB-UniRule"/>
</dbReference>
<dbReference type="GO" id="GO:0043022">
    <property type="term" value="F:ribosome binding"/>
    <property type="evidence" value="ECO:0007669"/>
    <property type="project" value="UniProtKB-UniRule"/>
</dbReference>
<dbReference type="GO" id="GO:0003746">
    <property type="term" value="F:translation elongation factor activity"/>
    <property type="evidence" value="ECO:0007669"/>
    <property type="project" value="UniProtKB-UniRule"/>
</dbReference>
<dbReference type="GO" id="GO:0045727">
    <property type="term" value="P:positive regulation of translation"/>
    <property type="evidence" value="ECO:0007669"/>
    <property type="project" value="UniProtKB-UniRule"/>
</dbReference>
<dbReference type="CDD" id="cd03699">
    <property type="entry name" value="EF4_II"/>
    <property type="match status" value="1"/>
</dbReference>
<dbReference type="CDD" id="cd16260">
    <property type="entry name" value="EF4_III"/>
    <property type="match status" value="1"/>
</dbReference>
<dbReference type="CDD" id="cd01890">
    <property type="entry name" value="LepA"/>
    <property type="match status" value="1"/>
</dbReference>
<dbReference type="CDD" id="cd03709">
    <property type="entry name" value="lepA_C"/>
    <property type="match status" value="1"/>
</dbReference>
<dbReference type="FunFam" id="3.40.50.300:FF:000078">
    <property type="entry name" value="Elongation factor 4"/>
    <property type="match status" value="1"/>
</dbReference>
<dbReference type="FunFam" id="2.40.30.10:FF:000015">
    <property type="entry name" value="Translation factor GUF1, mitochondrial"/>
    <property type="match status" value="1"/>
</dbReference>
<dbReference type="FunFam" id="3.30.70.240:FF:000007">
    <property type="entry name" value="Translation factor GUF1, mitochondrial"/>
    <property type="match status" value="1"/>
</dbReference>
<dbReference type="FunFam" id="3.30.70.2570:FF:000001">
    <property type="entry name" value="Translation factor GUF1, mitochondrial"/>
    <property type="match status" value="1"/>
</dbReference>
<dbReference type="FunFam" id="3.30.70.870:FF:000004">
    <property type="entry name" value="Translation factor GUF1, mitochondrial"/>
    <property type="match status" value="1"/>
</dbReference>
<dbReference type="Gene3D" id="3.30.70.240">
    <property type="match status" value="1"/>
</dbReference>
<dbReference type="Gene3D" id="3.30.70.2570">
    <property type="entry name" value="Elongation factor 4, C-terminal domain"/>
    <property type="match status" value="1"/>
</dbReference>
<dbReference type="Gene3D" id="3.30.70.870">
    <property type="entry name" value="Elongation Factor G (Translational Gtpase), domain 3"/>
    <property type="match status" value="1"/>
</dbReference>
<dbReference type="Gene3D" id="3.40.50.300">
    <property type="entry name" value="P-loop containing nucleotide triphosphate hydrolases"/>
    <property type="match status" value="1"/>
</dbReference>
<dbReference type="Gene3D" id="2.40.30.10">
    <property type="entry name" value="Translation factors"/>
    <property type="match status" value="1"/>
</dbReference>
<dbReference type="HAMAP" id="MF_00071">
    <property type="entry name" value="LepA"/>
    <property type="match status" value="1"/>
</dbReference>
<dbReference type="InterPro" id="IPR006297">
    <property type="entry name" value="EF-4"/>
</dbReference>
<dbReference type="InterPro" id="IPR035647">
    <property type="entry name" value="EFG_III/V"/>
</dbReference>
<dbReference type="InterPro" id="IPR000640">
    <property type="entry name" value="EFG_V-like"/>
</dbReference>
<dbReference type="InterPro" id="IPR004161">
    <property type="entry name" value="EFTu-like_2"/>
</dbReference>
<dbReference type="InterPro" id="IPR038363">
    <property type="entry name" value="LepA_C_sf"/>
</dbReference>
<dbReference type="InterPro" id="IPR013842">
    <property type="entry name" value="LepA_CTD"/>
</dbReference>
<dbReference type="InterPro" id="IPR035654">
    <property type="entry name" value="LepA_IV"/>
</dbReference>
<dbReference type="InterPro" id="IPR027417">
    <property type="entry name" value="P-loop_NTPase"/>
</dbReference>
<dbReference type="InterPro" id="IPR005225">
    <property type="entry name" value="Small_GTP-bd"/>
</dbReference>
<dbReference type="InterPro" id="IPR000795">
    <property type="entry name" value="T_Tr_GTP-bd_dom"/>
</dbReference>
<dbReference type="InterPro" id="IPR009000">
    <property type="entry name" value="Transl_B-barrel_sf"/>
</dbReference>
<dbReference type="NCBIfam" id="TIGR01393">
    <property type="entry name" value="lepA"/>
    <property type="match status" value="1"/>
</dbReference>
<dbReference type="NCBIfam" id="TIGR00231">
    <property type="entry name" value="small_GTP"/>
    <property type="match status" value="1"/>
</dbReference>
<dbReference type="PANTHER" id="PTHR43512:SF4">
    <property type="entry name" value="TRANSLATION FACTOR GUF1 HOMOLOG, CHLOROPLASTIC"/>
    <property type="match status" value="1"/>
</dbReference>
<dbReference type="PANTHER" id="PTHR43512">
    <property type="entry name" value="TRANSLATION FACTOR GUF1-RELATED"/>
    <property type="match status" value="1"/>
</dbReference>
<dbReference type="Pfam" id="PF00679">
    <property type="entry name" value="EFG_C"/>
    <property type="match status" value="1"/>
</dbReference>
<dbReference type="Pfam" id="PF00009">
    <property type="entry name" value="GTP_EFTU"/>
    <property type="match status" value="1"/>
</dbReference>
<dbReference type="Pfam" id="PF03144">
    <property type="entry name" value="GTP_EFTU_D2"/>
    <property type="match status" value="1"/>
</dbReference>
<dbReference type="Pfam" id="PF06421">
    <property type="entry name" value="LepA_C"/>
    <property type="match status" value="1"/>
</dbReference>
<dbReference type="PRINTS" id="PR00315">
    <property type="entry name" value="ELONGATNFCT"/>
</dbReference>
<dbReference type="SMART" id="SM00838">
    <property type="entry name" value="EFG_C"/>
    <property type="match status" value="1"/>
</dbReference>
<dbReference type="SUPFAM" id="SSF54980">
    <property type="entry name" value="EF-G C-terminal domain-like"/>
    <property type="match status" value="2"/>
</dbReference>
<dbReference type="SUPFAM" id="SSF52540">
    <property type="entry name" value="P-loop containing nucleoside triphosphate hydrolases"/>
    <property type="match status" value="1"/>
</dbReference>
<dbReference type="SUPFAM" id="SSF50447">
    <property type="entry name" value="Translation proteins"/>
    <property type="match status" value="1"/>
</dbReference>
<dbReference type="PROSITE" id="PS51722">
    <property type="entry name" value="G_TR_2"/>
    <property type="match status" value="1"/>
</dbReference>
<protein>
    <recommendedName>
        <fullName evidence="1">Elongation factor 4</fullName>
        <shortName evidence="1">EF-4</shortName>
        <ecNumber evidence="1">3.6.5.n1</ecNumber>
    </recommendedName>
    <alternativeName>
        <fullName evidence="1">Ribosomal back-translocase LepA</fullName>
    </alternativeName>
</protein>